<keyword id="KW-0030">Aminoacyl-tRNA synthetase</keyword>
<keyword id="KW-0067">ATP-binding</keyword>
<keyword id="KW-0963">Cytoplasm</keyword>
<keyword id="KW-0436">Ligase</keyword>
<keyword id="KW-0547">Nucleotide-binding</keyword>
<keyword id="KW-0648">Protein biosynthesis</keyword>
<keyword id="KW-1185">Reference proteome</keyword>
<protein>
    <recommendedName>
        <fullName evidence="1">Glutamate--tRNA ligase</fullName>
        <ecNumber evidence="1">6.1.1.17</ecNumber>
    </recommendedName>
    <alternativeName>
        <fullName evidence="1">Glutamyl-tRNA synthetase</fullName>
        <shortName evidence="1">GluRS</shortName>
    </alternativeName>
</protein>
<dbReference type="EC" id="6.1.1.17" evidence="1"/>
<dbReference type="EMBL" id="BA000035">
    <property type="protein sequence ID" value="BAC18199.1"/>
    <property type="status" value="ALT_INIT"/>
    <property type="molecule type" value="Genomic_DNA"/>
</dbReference>
<dbReference type="RefSeq" id="WP_035109516.1">
    <property type="nucleotide sequence ID" value="NC_004369.1"/>
</dbReference>
<dbReference type="SMR" id="Q8FPU9"/>
<dbReference type="STRING" id="196164.gene:10741798"/>
<dbReference type="KEGG" id="cef:CE1389"/>
<dbReference type="eggNOG" id="COG0008">
    <property type="taxonomic scope" value="Bacteria"/>
</dbReference>
<dbReference type="HOGENOM" id="CLU_015768_6_1_11"/>
<dbReference type="OrthoDB" id="9807503at2"/>
<dbReference type="Proteomes" id="UP000001409">
    <property type="component" value="Chromosome"/>
</dbReference>
<dbReference type="GO" id="GO:0005829">
    <property type="term" value="C:cytosol"/>
    <property type="evidence" value="ECO:0007669"/>
    <property type="project" value="TreeGrafter"/>
</dbReference>
<dbReference type="GO" id="GO:0005524">
    <property type="term" value="F:ATP binding"/>
    <property type="evidence" value="ECO:0007669"/>
    <property type="project" value="UniProtKB-UniRule"/>
</dbReference>
<dbReference type="GO" id="GO:0004818">
    <property type="term" value="F:glutamate-tRNA ligase activity"/>
    <property type="evidence" value="ECO:0007669"/>
    <property type="project" value="UniProtKB-UniRule"/>
</dbReference>
<dbReference type="GO" id="GO:0000049">
    <property type="term" value="F:tRNA binding"/>
    <property type="evidence" value="ECO:0007669"/>
    <property type="project" value="InterPro"/>
</dbReference>
<dbReference type="GO" id="GO:0008270">
    <property type="term" value="F:zinc ion binding"/>
    <property type="evidence" value="ECO:0007669"/>
    <property type="project" value="InterPro"/>
</dbReference>
<dbReference type="GO" id="GO:0006424">
    <property type="term" value="P:glutamyl-tRNA aminoacylation"/>
    <property type="evidence" value="ECO:0007669"/>
    <property type="project" value="UniProtKB-UniRule"/>
</dbReference>
<dbReference type="CDD" id="cd00808">
    <property type="entry name" value="GluRS_core"/>
    <property type="match status" value="1"/>
</dbReference>
<dbReference type="FunFam" id="3.40.50.620:FF:000149">
    <property type="entry name" value="Glutamate--tRNA ligase"/>
    <property type="match status" value="1"/>
</dbReference>
<dbReference type="Gene3D" id="1.10.10.350">
    <property type="match status" value="1"/>
</dbReference>
<dbReference type="Gene3D" id="1.10.8.70">
    <property type="entry name" value="Glutamate-tRNA synthetase, class I, anticodon-binding domain 1"/>
    <property type="match status" value="1"/>
</dbReference>
<dbReference type="Gene3D" id="3.40.50.620">
    <property type="entry name" value="HUPs"/>
    <property type="match status" value="1"/>
</dbReference>
<dbReference type="HAMAP" id="MF_00022">
    <property type="entry name" value="Glu_tRNA_synth_type1"/>
    <property type="match status" value="1"/>
</dbReference>
<dbReference type="InterPro" id="IPR045462">
    <property type="entry name" value="aa-tRNA-synth_I_cd-bd"/>
</dbReference>
<dbReference type="InterPro" id="IPR020751">
    <property type="entry name" value="aa-tRNA-synth_I_codon-bd_sub2"/>
</dbReference>
<dbReference type="InterPro" id="IPR008925">
    <property type="entry name" value="aa_tRNA-synth_I_cd-bd_sf"/>
</dbReference>
<dbReference type="InterPro" id="IPR004527">
    <property type="entry name" value="Glu-tRNA-ligase_bac/mito"/>
</dbReference>
<dbReference type="InterPro" id="IPR020752">
    <property type="entry name" value="Glu-tRNA-synth_I_codon-bd_sub1"/>
</dbReference>
<dbReference type="InterPro" id="IPR000924">
    <property type="entry name" value="Glu/Gln-tRNA-synth"/>
</dbReference>
<dbReference type="InterPro" id="IPR020058">
    <property type="entry name" value="Glu/Gln-tRNA-synth_Ib_cat-dom"/>
</dbReference>
<dbReference type="InterPro" id="IPR049940">
    <property type="entry name" value="GluQ/Sye"/>
</dbReference>
<dbReference type="InterPro" id="IPR033910">
    <property type="entry name" value="GluRS_core"/>
</dbReference>
<dbReference type="InterPro" id="IPR014729">
    <property type="entry name" value="Rossmann-like_a/b/a_fold"/>
</dbReference>
<dbReference type="NCBIfam" id="TIGR00464">
    <property type="entry name" value="gltX_bact"/>
    <property type="match status" value="1"/>
</dbReference>
<dbReference type="PANTHER" id="PTHR43311">
    <property type="entry name" value="GLUTAMATE--TRNA LIGASE"/>
    <property type="match status" value="1"/>
</dbReference>
<dbReference type="PANTHER" id="PTHR43311:SF2">
    <property type="entry name" value="GLUTAMATE--TRNA LIGASE, MITOCHONDRIAL-RELATED"/>
    <property type="match status" value="1"/>
</dbReference>
<dbReference type="Pfam" id="PF19269">
    <property type="entry name" value="Anticodon_2"/>
    <property type="match status" value="1"/>
</dbReference>
<dbReference type="Pfam" id="PF00749">
    <property type="entry name" value="tRNA-synt_1c"/>
    <property type="match status" value="1"/>
</dbReference>
<dbReference type="PRINTS" id="PR00987">
    <property type="entry name" value="TRNASYNTHGLU"/>
</dbReference>
<dbReference type="SUPFAM" id="SSF48163">
    <property type="entry name" value="An anticodon-binding domain of class I aminoacyl-tRNA synthetases"/>
    <property type="match status" value="1"/>
</dbReference>
<dbReference type="SUPFAM" id="SSF52374">
    <property type="entry name" value="Nucleotidylyl transferase"/>
    <property type="match status" value="1"/>
</dbReference>
<gene>
    <name evidence="1" type="primary">gltX</name>
    <name type="ordered locus">CE1389</name>
</gene>
<feature type="chain" id="PRO_0000119548" description="Glutamate--tRNA ligase">
    <location>
        <begin position="1"/>
        <end position="493"/>
    </location>
</feature>
<feature type="short sequence motif" description="'HIGH' region" evidence="1">
    <location>
        <begin position="10"/>
        <end position="20"/>
    </location>
</feature>
<feature type="short sequence motif" description="'KMSKS' region" evidence="1">
    <location>
        <begin position="254"/>
        <end position="258"/>
    </location>
</feature>
<feature type="binding site" evidence="1">
    <location>
        <position position="257"/>
    </location>
    <ligand>
        <name>ATP</name>
        <dbReference type="ChEBI" id="CHEBI:30616"/>
    </ligand>
</feature>
<reference key="1">
    <citation type="journal article" date="2003" name="Genome Res.">
        <title>Comparative complete genome sequence analysis of the amino acid replacements responsible for the thermostability of Corynebacterium efficiens.</title>
        <authorList>
            <person name="Nishio Y."/>
            <person name="Nakamura Y."/>
            <person name="Kawarabayasi Y."/>
            <person name="Usuda Y."/>
            <person name="Kimura E."/>
            <person name="Sugimoto S."/>
            <person name="Matsui K."/>
            <person name="Yamagishi A."/>
            <person name="Kikuchi H."/>
            <person name="Ikeo K."/>
            <person name="Gojobori T."/>
        </authorList>
    </citation>
    <scope>NUCLEOTIDE SEQUENCE [LARGE SCALE GENOMIC DNA]</scope>
    <source>
        <strain>DSM 44549 / YS-314 / AJ 12310 / JCM 11189 / NBRC 100395</strain>
    </source>
</reference>
<organism>
    <name type="scientific">Corynebacterium efficiens (strain DSM 44549 / YS-314 / AJ 12310 / JCM 11189 / NBRC 100395)</name>
    <dbReference type="NCBI Taxonomy" id="196164"/>
    <lineage>
        <taxon>Bacteria</taxon>
        <taxon>Bacillati</taxon>
        <taxon>Actinomycetota</taxon>
        <taxon>Actinomycetes</taxon>
        <taxon>Mycobacteriales</taxon>
        <taxon>Corynebacteriaceae</taxon>
        <taxon>Corynebacterium</taxon>
    </lineage>
</organism>
<evidence type="ECO:0000255" key="1">
    <source>
        <dbReference type="HAMAP-Rule" id="MF_00022"/>
    </source>
</evidence>
<evidence type="ECO:0000305" key="2"/>
<name>SYE_COREF</name>
<proteinExistence type="inferred from homology"/>
<accession>Q8FPU9</accession>
<sequence length="493" mass="55275">MTDVRVRFCPSPTGTPHVGLVRTALFNWAYARHTGGKLIFRIEDTDAARDSEESYAALLDAMNWLGLNWDEGVEVGGPHEPYRQSQRSDIYQDVLKKLIDAGEVYPAYSTAEEVEERHRAAGRDPKLGYDNYDRTLTEDEITAFEAEGRKPVWRLRMPEQDWKWNDLVRGEVEFKSFTQPDFVVARSNGQPLYTLVNPVDDALMEITHVLRGEDLLPSTPRQIALYEALKRIGVAKQTPVFGHLPFVMGEGNKKLSKRDPQSDLFQHRTNGIIPEGMLNYLGLLGWSLSADQDIFTVEEFVANFDIADVLGNPARFDQKKLEAINADHIRLLPAGEFEERLRAHLSEFTDFPEDYPAEKFSFAAELVQTRIKTLAEGYDLLKFLVTADEDLVLDEKAAKKNLKEAAIEPLDAGINALEAVAEWTTPNIEAALTRALIEELGLKPRVAYGALRVAISGAAVSPPLFESMELLGRESTLTRLRAARAATPYQAAE</sequence>
<comment type="function">
    <text evidence="1">Catalyzes the attachment of glutamate to tRNA(Glu) in a two-step reaction: glutamate is first activated by ATP to form Glu-AMP and then transferred to the acceptor end of tRNA(Glu).</text>
</comment>
<comment type="catalytic activity">
    <reaction evidence="1">
        <text>tRNA(Glu) + L-glutamate + ATP = L-glutamyl-tRNA(Glu) + AMP + diphosphate</text>
        <dbReference type="Rhea" id="RHEA:23540"/>
        <dbReference type="Rhea" id="RHEA-COMP:9663"/>
        <dbReference type="Rhea" id="RHEA-COMP:9680"/>
        <dbReference type="ChEBI" id="CHEBI:29985"/>
        <dbReference type="ChEBI" id="CHEBI:30616"/>
        <dbReference type="ChEBI" id="CHEBI:33019"/>
        <dbReference type="ChEBI" id="CHEBI:78442"/>
        <dbReference type="ChEBI" id="CHEBI:78520"/>
        <dbReference type="ChEBI" id="CHEBI:456215"/>
        <dbReference type="EC" id="6.1.1.17"/>
    </reaction>
</comment>
<comment type="subunit">
    <text evidence="1">Monomer.</text>
</comment>
<comment type="subcellular location">
    <subcellularLocation>
        <location evidence="1">Cytoplasm</location>
    </subcellularLocation>
</comment>
<comment type="similarity">
    <text evidence="1">Belongs to the class-I aminoacyl-tRNA synthetase family. Glutamate--tRNA ligase type 1 subfamily.</text>
</comment>
<comment type="sequence caution" evidence="2">
    <conflict type="erroneous initiation">
        <sequence resource="EMBL-CDS" id="BAC18199"/>
    </conflict>
</comment>